<comment type="function">
    <text evidence="1">High affinity, high specificity proton-dependent sulfate transporter, which mediates sulfate uptake. Provides the sulfur source for the cysteine synthesis pathway.</text>
</comment>
<comment type="subcellular location">
    <subcellularLocation>
        <location evidence="1">Cell inner membrane</location>
        <topology evidence="1">Multi-pass membrane protein</topology>
    </subcellularLocation>
</comment>
<comment type="similarity">
    <text evidence="1">Belongs to the CysZ family.</text>
</comment>
<name>CYSZ_ECOSM</name>
<sequence>MVSSFTSAPRSGFYYFAQGWKLVSQPGIRRFVILPLLVNILLMGGAFWWLFTQLDVWIPTLMSYVPDWLQWLSYLLWPLAVISVLLVFGYFFSTIANWIAAPFNGLLAEQLEARLTGATPPDTGIFGIMKDVPRIMKREWQKFAWYLPRAIVLLILYFIPGIGQTVAPVLWFLFSAWMLAIQYCDYPFDNHKVPFKEMRTALRTRKITNMQFGALTSLFTMIPLLNLFIMPVAVCGATAMWVDCYRDKHAMWR</sequence>
<proteinExistence type="inferred from homology"/>
<evidence type="ECO:0000255" key="1">
    <source>
        <dbReference type="HAMAP-Rule" id="MF_00468"/>
    </source>
</evidence>
<accession>B1LMK7</accession>
<protein>
    <recommendedName>
        <fullName evidence="1">Sulfate transporter CysZ</fullName>
    </recommendedName>
</protein>
<reference key="1">
    <citation type="journal article" date="2008" name="J. Bacteriol.">
        <title>Insights into the environmental resistance gene pool from the genome sequence of the multidrug-resistant environmental isolate Escherichia coli SMS-3-5.</title>
        <authorList>
            <person name="Fricke W.F."/>
            <person name="Wright M.S."/>
            <person name="Lindell A.H."/>
            <person name="Harkins D.M."/>
            <person name="Baker-Austin C."/>
            <person name="Ravel J."/>
            <person name="Stepanauskas R."/>
        </authorList>
    </citation>
    <scope>NUCLEOTIDE SEQUENCE [LARGE SCALE GENOMIC DNA]</scope>
    <source>
        <strain>SMS-3-5 / SECEC</strain>
    </source>
</reference>
<dbReference type="EMBL" id="CP000970">
    <property type="protein sequence ID" value="ACB20025.1"/>
    <property type="molecule type" value="Genomic_DNA"/>
</dbReference>
<dbReference type="RefSeq" id="WP_000254839.1">
    <property type="nucleotide sequence ID" value="NC_010498.1"/>
</dbReference>
<dbReference type="SMR" id="B1LMK7"/>
<dbReference type="GeneID" id="93774718"/>
<dbReference type="KEGG" id="ecm:EcSMS35_2568"/>
<dbReference type="HOGENOM" id="CLU_070331_1_0_6"/>
<dbReference type="Proteomes" id="UP000007011">
    <property type="component" value="Chromosome"/>
</dbReference>
<dbReference type="GO" id="GO:0005886">
    <property type="term" value="C:plasma membrane"/>
    <property type="evidence" value="ECO:0007669"/>
    <property type="project" value="UniProtKB-SubCell"/>
</dbReference>
<dbReference type="GO" id="GO:0009675">
    <property type="term" value="F:high-affinity sulfate:proton symporter activity"/>
    <property type="evidence" value="ECO:0007669"/>
    <property type="project" value="TreeGrafter"/>
</dbReference>
<dbReference type="GO" id="GO:0019344">
    <property type="term" value="P:cysteine biosynthetic process"/>
    <property type="evidence" value="ECO:0007669"/>
    <property type="project" value="UniProtKB-UniRule"/>
</dbReference>
<dbReference type="GO" id="GO:0000103">
    <property type="term" value="P:sulfate assimilation"/>
    <property type="evidence" value="ECO:0007669"/>
    <property type="project" value="InterPro"/>
</dbReference>
<dbReference type="HAMAP" id="MF_00468">
    <property type="entry name" value="CysZ"/>
    <property type="match status" value="1"/>
</dbReference>
<dbReference type="InterPro" id="IPR050480">
    <property type="entry name" value="CysZ_sulfate_transptr"/>
</dbReference>
<dbReference type="InterPro" id="IPR022985">
    <property type="entry name" value="Sulfate_CysZ"/>
</dbReference>
<dbReference type="NCBIfam" id="NF003433">
    <property type="entry name" value="PRK04949.1"/>
    <property type="match status" value="1"/>
</dbReference>
<dbReference type="PANTHER" id="PTHR37468">
    <property type="entry name" value="SULFATE TRANSPORTER CYSZ"/>
    <property type="match status" value="1"/>
</dbReference>
<dbReference type="PANTHER" id="PTHR37468:SF1">
    <property type="entry name" value="SULFATE TRANSPORTER CYSZ"/>
    <property type="match status" value="1"/>
</dbReference>
<dbReference type="Pfam" id="PF07264">
    <property type="entry name" value="EI24"/>
    <property type="match status" value="1"/>
</dbReference>
<feature type="chain" id="PRO_1000125499" description="Sulfate transporter CysZ">
    <location>
        <begin position="1"/>
        <end position="253"/>
    </location>
</feature>
<feature type="transmembrane region" description="Helical" evidence="1">
    <location>
        <begin position="31"/>
        <end position="51"/>
    </location>
</feature>
<feature type="transmembrane region" description="Helical" evidence="1">
    <location>
        <begin position="75"/>
        <end position="95"/>
    </location>
</feature>
<feature type="transmembrane region" description="Helical" evidence="1">
    <location>
        <begin position="151"/>
        <end position="171"/>
    </location>
</feature>
<feature type="transmembrane region" description="Helical" evidence="1">
    <location>
        <begin position="222"/>
        <end position="242"/>
    </location>
</feature>
<keyword id="KW-0028">Amino-acid biosynthesis</keyword>
<keyword id="KW-0997">Cell inner membrane</keyword>
<keyword id="KW-1003">Cell membrane</keyword>
<keyword id="KW-0198">Cysteine biosynthesis</keyword>
<keyword id="KW-0472">Membrane</keyword>
<keyword id="KW-0764">Sulfate transport</keyword>
<keyword id="KW-0812">Transmembrane</keyword>
<keyword id="KW-1133">Transmembrane helix</keyword>
<keyword id="KW-0813">Transport</keyword>
<gene>
    <name evidence="1" type="primary">cysZ</name>
    <name type="ordered locus">EcSMS35_2568</name>
</gene>
<organism>
    <name type="scientific">Escherichia coli (strain SMS-3-5 / SECEC)</name>
    <dbReference type="NCBI Taxonomy" id="439855"/>
    <lineage>
        <taxon>Bacteria</taxon>
        <taxon>Pseudomonadati</taxon>
        <taxon>Pseudomonadota</taxon>
        <taxon>Gammaproteobacteria</taxon>
        <taxon>Enterobacterales</taxon>
        <taxon>Enterobacteriaceae</taxon>
        <taxon>Escherichia</taxon>
    </lineage>
</organism>